<protein>
    <recommendedName>
        <fullName evidence="1">Serine--tRNA ligase</fullName>
        <ecNumber evidence="1">6.1.1.11</ecNumber>
    </recommendedName>
    <alternativeName>
        <fullName evidence="1">Seryl-tRNA synthetase</fullName>
        <shortName evidence="1">SerRS</shortName>
    </alternativeName>
    <alternativeName>
        <fullName evidence="1">Seryl-tRNA(Ser/Sec) synthetase</fullName>
    </alternativeName>
</protein>
<organism>
    <name type="scientific">Finegoldia magna (strain ATCC 29328 / DSM 20472 / WAL 2508)</name>
    <name type="common">Peptostreptococcus magnus</name>
    <dbReference type="NCBI Taxonomy" id="334413"/>
    <lineage>
        <taxon>Bacteria</taxon>
        <taxon>Bacillati</taxon>
        <taxon>Bacillota</taxon>
        <taxon>Tissierellia</taxon>
        <taxon>Tissierellales</taxon>
        <taxon>Peptoniphilaceae</taxon>
        <taxon>Finegoldia</taxon>
    </lineage>
</organism>
<feature type="chain" id="PRO_1000098069" description="Serine--tRNA ligase">
    <location>
        <begin position="1"/>
        <end position="421"/>
    </location>
</feature>
<feature type="binding site" evidence="1">
    <location>
        <begin position="230"/>
        <end position="232"/>
    </location>
    <ligand>
        <name>L-serine</name>
        <dbReference type="ChEBI" id="CHEBI:33384"/>
    </ligand>
</feature>
<feature type="binding site" evidence="1">
    <location>
        <begin position="261"/>
        <end position="263"/>
    </location>
    <ligand>
        <name>ATP</name>
        <dbReference type="ChEBI" id="CHEBI:30616"/>
    </ligand>
</feature>
<feature type="binding site" evidence="1">
    <location>
        <position position="284"/>
    </location>
    <ligand>
        <name>L-serine</name>
        <dbReference type="ChEBI" id="CHEBI:33384"/>
    </ligand>
</feature>
<feature type="binding site" evidence="1">
    <location>
        <begin position="348"/>
        <end position="351"/>
    </location>
    <ligand>
        <name>ATP</name>
        <dbReference type="ChEBI" id="CHEBI:30616"/>
    </ligand>
</feature>
<feature type="binding site" evidence="1">
    <location>
        <position position="383"/>
    </location>
    <ligand>
        <name>L-serine</name>
        <dbReference type="ChEBI" id="CHEBI:33384"/>
    </ligand>
</feature>
<comment type="function">
    <text evidence="1">Catalyzes the attachment of serine to tRNA(Ser). Is also able to aminoacylate tRNA(Sec) with serine, to form the misacylated tRNA L-seryl-tRNA(Sec), which will be further converted into selenocysteinyl-tRNA(Sec).</text>
</comment>
<comment type="catalytic activity">
    <reaction evidence="1">
        <text>tRNA(Ser) + L-serine + ATP = L-seryl-tRNA(Ser) + AMP + diphosphate + H(+)</text>
        <dbReference type="Rhea" id="RHEA:12292"/>
        <dbReference type="Rhea" id="RHEA-COMP:9669"/>
        <dbReference type="Rhea" id="RHEA-COMP:9703"/>
        <dbReference type="ChEBI" id="CHEBI:15378"/>
        <dbReference type="ChEBI" id="CHEBI:30616"/>
        <dbReference type="ChEBI" id="CHEBI:33019"/>
        <dbReference type="ChEBI" id="CHEBI:33384"/>
        <dbReference type="ChEBI" id="CHEBI:78442"/>
        <dbReference type="ChEBI" id="CHEBI:78533"/>
        <dbReference type="ChEBI" id="CHEBI:456215"/>
        <dbReference type="EC" id="6.1.1.11"/>
    </reaction>
</comment>
<comment type="catalytic activity">
    <reaction evidence="1">
        <text>tRNA(Sec) + L-serine + ATP = L-seryl-tRNA(Sec) + AMP + diphosphate + H(+)</text>
        <dbReference type="Rhea" id="RHEA:42580"/>
        <dbReference type="Rhea" id="RHEA-COMP:9742"/>
        <dbReference type="Rhea" id="RHEA-COMP:10128"/>
        <dbReference type="ChEBI" id="CHEBI:15378"/>
        <dbReference type="ChEBI" id="CHEBI:30616"/>
        <dbReference type="ChEBI" id="CHEBI:33019"/>
        <dbReference type="ChEBI" id="CHEBI:33384"/>
        <dbReference type="ChEBI" id="CHEBI:78442"/>
        <dbReference type="ChEBI" id="CHEBI:78533"/>
        <dbReference type="ChEBI" id="CHEBI:456215"/>
        <dbReference type="EC" id="6.1.1.11"/>
    </reaction>
</comment>
<comment type="pathway">
    <text evidence="1">Aminoacyl-tRNA biosynthesis; selenocysteinyl-tRNA(Sec) biosynthesis; L-seryl-tRNA(Sec) from L-serine and tRNA(Sec): step 1/1.</text>
</comment>
<comment type="subunit">
    <text evidence="1">Homodimer. The tRNA molecule binds across the dimer.</text>
</comment>
<comment type="subcellular location">
    <subcellularLocation>
        <location evidence="1">Cytoplasm</location>
    </subcellularLocation>
</comment>
<comment type="domain">
    <text evidence="1">Consists of two distinct domains, a catalytic core and a N-terminal extension that is involved in tRNA binding.</text>
</comment>
<comment type="similarity">
    <text evidence="1">Belongs to the class-II aminoacyl-tRNA synthetase family. Type-1 seryl-tRNA synthetase subfamily.</text>
</comment>
<name>SYS_FINM2</name>
<dbReference type="EC" id="6.1.1.11" evidence="1"/>
<dbReference type="EMBL" id="AP008971">
    <property type="protein sequence ID" value="BAG07519.1"/>
    <property type="molecule type" value="Genomic_DNA"/>
</dbReference>
<dbReference type="RefSeq" id="WP_012290174.1">
    <property type="nucleotide sequence ID" value="NC_010376.1"/>
</dbReference>
<dbReference type="SMR" id="B0RZY8"/>
<dbReference type="STRING" id="334413.FMG_0101"/>
<dbReference type="KEGG" id="fma:FMG_0101"/>
<dbReference type="eggNOG" id="COG0172">
    <property type="taxonomic scope" value="Bacteria"/>
</dbReference>
<dbReference type="HOGENOM" id="CLU_023797_1_1_9"/>
<dbReference type="UniPathway" id="UPA00906">
    <property type="reaction ID" value="UER00895"/>
</dbReference>
<dbReference type="Proteomes" id="UP000001319">
    <property type="component" value="Chromosome"/>
</dbReference>
<dbReference type="GO" id="GO:0005737">
    <property type="term" value="C:cytoplasm"/>
    <property type="evidence" value="ECO:0007669"/>
    <property type="project" value="UniProtKB-SubCell"/>
</dbReference>
<dbReference type="GO" id="GO:0005524">
    <property type="term" value="F:ATP binding"/>
    <property type="evidence" value="ECO:0007669"/>
    <property type="project" value="UniProtKB-UniRule"/>
</dbReference>
<dbReference type="GO" id="GO:0140096">
    <property type="term" value="F:catalytic activity, acting on a protein"/>
    <property type="evidence" value="ECO:0007669"/>
    <property type="project" value="UniProtKB-ARBA"/>
</dbReference>
<dbReference type="GO" id="GO:0004828">
    <property type="term" value="F:serine-tRNA ligase activity"/>
    <property type="evidence" value="ECO:0007669"/>
    <property type="project" value="UniProtKB-UniRule"/>
</dbReference>
<dbReference type="GO" id="GO:0016740">
    <property type="term" value="F:transferase activity"/>
    <property type="evidence" value="ECO:0007669"/>
    <property type="project" value="UniProtKB-ARBA"/>
</dbReference>
<dbReference type="GO" id="GO:0016260">
    <property type="term" value="P:selenocysteine biosynthetic process"/>
    <property type="evidence" value="ECO:0007669"/>
    <property type="project" value="UniProtKB-UniRule"/>
</dbReference>
<dbReference type="GO" id="GO:0006434">
    <property type="term" value="P:seryl-tRNA aminoacylation"/>
    <property type="evidence" value="ECO:0007669"/>
    <property type="project" value="UniProtKB-UniRule"/>
</dbReference>
<dbReference type="CDD" id="cd00770">
    <property type="entry name" value="SerRS_core"/>
    <property type="match status" value="1"/>
</dbReference>
<dbReference type="Gene3D" id="3.30.930.10">
    <property type="entry name" value="Bira Bifunctional Protein, Domain 2"/>
    <property type="match status" value="1"/>
</dbReference>
<dbReference type="Gene3D" id="1.10.287.40">
    <property type="entry name" value="Serine-tRNA synthetase, tRNA binding domain"/>
    <property type="match status" value="1"/>
</dbReference>
<dbReference type="HAMAP" id="MF_00176">
    <property type="entry name" value="Ser_tRNA_synth_type1"/>
    <property type="match status" value="1"/>
</dbReference>
<dbReference type="InterPro" id="IPR002314">
    <property type="entry name" value="aa-tRNA-synt_IIb"/>
</dbReference>
<dbReference type="InterPro" id="IPR006195">
    <property type="entry name" value="aa-tRNA-synth_II"/>
</dbReference>
<dbReference type="InterPro" id="IPR045864">
    <property type="entry name" value="aa-tRNA-synth_II/BPL/LPL"/>
</dbReference>
<dbReference type="InterPro" id="IPR002317">
    <property type="entry name" value="Ser-tRNA-ligase_type_1"/>
</dbReference>
<dbReference type="InterPro" id="IPR015866">
    <property type="entry name" value="Ser-tRNA-synth_1_N"/>
</dbReference>
<dbReference type="InterPro" id="IPR042103">
    <property type="entry name" value="SerRS_1_N_sf"/>
</dbReference>
<dbReference type="InterPro" id="IPR033729">
    <property type="entry name" value="SerRS_core"/>
</dbReference>
<dbReference type="InterPro" id="IPR010978">
    <property type="entry name" value="tRNA-bd_arm"/>
</dbReference>
<dbReference type="NCBIfam" id="TIGR00414">
    <property type="entry name" value="serS"/>
    <property type="match status" value="1"/>
</dbReference>
<dbReference type="PANTHER" id="PTHR43697:SF1">
    <property type="entry name" value="SERINE--TRNA LIGASE"/>
    <property type="match status" value="1"/>
</dbReference>
<dbReference type="PANTHER" id="PTHR43697">
    <property type="entry name" value="SERYL-TRNA SYNTHETASE"/>
    <property type="match status" value="1"/>
</dbReference>
<dbReference type="Pfam" id="PF02403">
    <property type="entry name" value="Seryl_tRNA_N"/>
    <property type="match status" value="1"/>
</dbReference>
<dbReference type="Pfam" id="PF00587">
    <property type="entry name" value="tRNA-synt_2b"/>
    <property type="match status" value="1"/>
</dbReference>
<dbReference type="PIRSF" id="PIRSF001529">
    <property type="entry name" value="Ser-tRNA-synth_IIa"/>
    <property type="match status" value="1"/>
</dbReference>
<dbReference type="PRINTS" id="PR00981">
    <property type="entry name" value="TRNASYNTHSER"/>
</dbReference>
<dbReference type="SUPFAM" id="SSF55681">
    <property type="entry name" value="Class II aaRS and biotin synthetases"/>
    <property type="match status" value="1"/>
</dbReference>
<dbReference type="SUPFAM" id="SSF46589">
    <property type="entry name" value="tRNA-binding arm"/>
    <property type="match status" value="1"/>
</dbReference>
<dbReference type="PROSITE" id="PS50862">
    <property type="entry name" value="AA_TRNA_LIGASE_II"/>
    <property type="match status" value="1"/>
</dbReference>
<sequence>MLDIKRIRNNPEEIVEALKKRRGEYPIQKLLATDEKRREVIQKVESMKAEQNKLSKQVPQMKKNGEDTTELFKNLKKLSDDIKNLDDDLKDIDDEIREYLMEIPNTPNKDVPVGLDDTENLEMRKWGEPRKFDFDIKAHWDLGVDLDILDFERATKISKSRFSVFKGKGARLERALMNFMVDLHTDKQGYTEMNTPVLMSPSAMMGTGQIPKFKEDMFYCEKDDMYLAPTAEVPVTNLLGGEILEQGSLPIYYTAFTQCFRREAGSAGRDTRGLIRNHQFEKVEMVKFVEPSTSYDELEKLTNNAEEILQLLEIPYRVVRLCSGDLGFSSAMTYDIEVWMPSYNRYVEISSCSNFEDFQARRANIRYRDENNKPQYVHTLNGSGLAIGRCFAAVIENYQQADGSIKIPEVLQKYTGFDIID</sequence>
<gene>
    <name evidence="1" type="primary">serS</name>
    <name type="ordered locus">FMG_0101</name>
</gene>
<keyword id="KW-0030">Aminoacyl-tRNA synthetase</keyword>
<keyword id="KW-0067">ATP-binding</keyword>
<keyword id="KW-0963">Cytoplasm</keyword>
<keyword id="KW-0436">Ligase</keyword>
<keyword id="KW-0547">Nucleotide-binding</keyword>
<keyword id="KW-0648">Protein biosynthesis</keyword>
<keyword id="KW-1185">Reference proteome</keyword>
<reference key="1">
    <citation type="journal article" date="2008" name="DNA Res.">
        <title>Complete genome sequence of Finegoldia magna, an anaerobic opportunistic pathogen.</title>
        <authorList>
            <person name="Goto T."/>
            <person name="Yamashita A."/>
            <person name="Hirakawa H."/>
            <person name="Matsutani M."/>
            <person name="Todo K."/>
            <person name="Ohshima K."/>
            <person name="Toh H."/>
            <person name="Miyamoto K."/>
            <person name="Kuhara S."/>
            <person name="Hattori M."/>
            <person name="Shimizu T."/>
            <person name="Akimoto S."/>
        </authorList>
    </citation>
    <scope>NUCLEOTIDE SEQUENCE [LARGE SCALE GENOMIC DNA]</scope>
    <source>
        <strain>ATCC 29328 / DSM 20472 / WAL 2508</strain>
    </source>
</reference>
<evidence type="ECO:0000255" key="1">
    <source>
        <dbReference type="HAMAP-Rule" id="MF_00176"/>
    </source>
</evidence>
<proteinExistence type="inferred from homology"/>
<accession>B0RZY8</accession>